<organism>
    <name type="scientific">Nostoc sp. (strain PCC 7120 / SAG 25.82 / UTEX 2576)</name>
    <dbReference type="NCBI Taxonomy" id="103690"/>
    <lineage>
        <taxon>Bacteria</taxon>
        <taxon>Bacillati</taxon>
        <taxon>Cyanobacteriota</taxon>
        <taxon>Cyanophyceae</taxon>
        <taxon>Nostocales</taxon>
        <taxon>Nostocaceae</taxon>
        <taxon>Nostoc</taxon>
    </lineage>
</organism>
<keyword id="KW-0067">ATP-binding</keyword>
<keyword id="KW-0143">Chaperone</keyword>
<keyword id="KW-0479">Metal-binding</keyword>
<keyword id="KW-0547">Nucleotide-binding</keyword>
<keyword id="KW-1185">Reference proteome</keyword>
<keyword id="KW-0862">Zinc</keyword>
<protein>
    <recommendedName>
        <fullName evidence="1">ATP-dependent Clp protease ATP-binding subunit ClpX</fullName>
    </recommendedName>
</protein>
<comment type="function">
    <text evidence="1">ATP-dependent specificity component of the Clp protease. It directs the protease to specific substrates. Can perform chaperone functions in the absence of ClpP.</text>
</comment>
<comment type="subunit">
    <text evidence="1">Component of the ClpX-ClpP complex. Forms a hexameric ring that, in the presence of ATP, binds to fourteen ClpP subunits assembled into a disk-like structure with a central cavity, resembling the structure of eukaryotic proteasomes.</text>
</comment>
<comment type="similarity">
    <text evidence="1">Belongs to the ClpX chaperone family.</text>
</comment>
<reference key="1">
    <citation type="journal article" date="2001" name="DNA Res.">
        <title>Complete genomic sequence of the filamentous nitrogen-fixing cyanobacterium Anabaena sp. strain PCC 7120.</title>
        <authorList>
            <person name="Kaneko T."/>
            <person name="Nakamura Y."/>
            <person name="Wolk C.P."/>
            <person name="Kuritz T."/>
            <person name="Sasamoto S."/>
            <person name="Watanabe A."/>
            <person name="Iriguchi M."/>
            <person name="Ishikawa A."/>
            <person name="Kawashima K."/>
            <person name="Kimura T."/>
            <person name="Kishida Y."/>
            <person name="Kohara M."/>
            <person name="Matsumoto M."/>
            <person name="Matsuno A."/>
            <person name="Muraki A."/>
            <person name="Nakazaki N."/>
            <person name="Shimpo S."/>
            <person name="Sugimoto M."/>
            <person name="Takazawa M."/>
            <person name="Yamada M."/>
            <person name="Yasuda M."/>
            <person name="Tabata S."/>
        </authorList>
    </citation>
    <scope>NUCLEOTIDE SEQUENCE [LARGE SCALE GENOMIC DNA]</scope>
    <source>
        <strain>PCC 7120 / SAG 25.82 / UTEX 2576</strain>
    </source>
</reference>
<gene>
    <name evidence="1" type="primary">clpX</name>
    <name type="synonym">clpC</name>
    <name type="ordered locus">alr3684</name>
</gene>
<sequence length="445" mass="48939">MSKYDSHLKCSFCGKSQEQVRKLIAGPGVYICDECVDLCNEILDEELLDTSGAAAQPAPKSEPPQKRRARSSNLSLSQIPKPREIKKYLDEHVIGQDEAKKVLSVAVYNHYKRLAILQSKGSGKNGDDAVELQKSNILLIGPTGCGKTLLAQTLAKILDVPFAVADATTLTEAGYVGEDVENILLRLLQVADLDVEEAQRGIIYIDEIDKIARKSENPSITRDVSGEGVQQALLKMLEGTVANVPPQGGRKHPYQDCIQIDTSNILFICGGAFVGLEKVVDQRGGKKSIGFVQPGEGQSKEKRAADVLRHLEPDDLVKFGMIPEFIGRVPMVAVVDPLDEEALMAILTQPRSALVKQYQKLLKMDNVQLDFKPDALKAIAQEAYRRKTGARALRGIVEELMLDVMYELPSRKDVTRCTVTREMVEKRSTAELLVHPSSLPKPESA</sequence>
<proteinExistence type="inferred from homology"/>
<evidence type="ECO:0000255" key="1">
    <source>
        <dbReference type="HAMAP-Rule" id="MF_00175"/>
    </source>
</evidence>
<evidence type="ECO:0000255" key="2">
    <source>
        <dbReference type="PROSITE-ProRule" id="PRU01250"/>
    </source>
</evidence>
<evidence type="ECO:0000256" key="3">
    <source>
        <dbReference type="SAM" id="MobiDB-lite"/>
    </source>
</evidence>
<feature type="chain" id="PRO_0000160300" description="ATP-dependent Clp protease ATP-binding subunit ClpX">
    <location>
        <begin position="1"/>
        <end position="445"/>
    </location>
</feature>
<feature type="domain" description="ClpX-type ZB" evidence="2">
    <location>
        <begin position="1"/>
        <end position="51"/>
    </location>
</feature>
<feature type="region of interest" description="Disordered" evidence="3">
    <location>
        <begin position="53"/>
        <end position="76"/>
    </location>
</feature>
<feature type="binding site" evidence="2">
    <location>
        <position position="10"/>
    </location>
    <ligand>
        <name>Zn(2+)</name>
        <dbReference type="ChEBI" id="CHEBI:29105"/>
    </ligand>
</feature>
<feature type="binding site" evidence="2">
    <location>
        <position position="13"/>
    </location>
    <ligand>
        <name>Zn(2+)</name>
        <dbReference type="ChEBI" id="CHEBI:29105"/>
    </ligand>
</feature>
<feature type="binding site" evidence="2">
    <location>
        <position position="32"/>
    </location>
    <ligand>
        <name>Zn(2+)</name>
        <dbReference type="ChEBI" id="CHEBI:29105"/>
    </ligand>
</feature>
<feature type="binding site" evidence="2">
    <location>
        <position position="35"/>
    </location>
    <ligand>
        <name>Zn(2+)</name>
        <dbReference type="ChEBI" id="CHEBI:29105"/>
    </ligand>
</feature>
<feature type="binding site" evidence="1">
    <location>
        <begin position="142"/>
        <end position="149"/>
    </location>
    <ligand>
        <name>ATP</name>
        <dbReference type="ChEBI" id="CHEBI:30616"/>
    </ligand>
</feature>
<dbReference type="EMBL" id="BA000019">
    <property type="protein sequence ID" value="BAB75383.1"/>
    <property type="molecule type" value="Genomic_DNA"/>
</dbReference>
<dbReference type="PIR" id="AE2266">
    <property type="entry name" value="AE2266"/>
</dbReference>
<dbReference type="RefSeq" id="WP_010997827.1">
    <property type="nucleotide sequence ID" value="NZ_RSCN01000007.1"/>
</dbReference>
<dbReference type="SMR" id="Q8YQX7"/>
<dbReference type="STRING" id="103690.gene:10495726"/>
<dbReference type="KEGG" id="ana:alr3684"/>
<dbReference type="eggNOG" id="COG1219">
    <property type="taxonomic scope" value="Bacteria"/>
</dbReference>
<dbReference type="OrthoDB" id="9804062at2"/>
<dbReference type="Proteomes" id="UP000002483">
    <property type="component" value="Chromosome"/>
</dbReference>
<dbReference type="GO" id="GO:0009376">
    <property type="term" value="C:HslUV protease complex"/>
    <property type="evidence" value="ECO:0007669"/>
    <property type="project" value="TreeGrafter"/>
</dbReference>
<dbReference type="GO" id="GO:0005524">
    <property type="term" value="F:ATP binding"/>
    <property type="evidence" value="ECO:0007669"/>
    <property type="project" value="UniProtKB-UniRule"/>
</dbReference>
<dbReference type="GO" id="GO:0016887">
    <property type="term" value="F:ATP hydrolysis activity"/>
    <property type="evidence" value="ECO:0007669"/>
    <property type="project" value="InterPro"/>
</dbReference>
<dbReference type="GO" id="GO:0140662">
    <property type="term" value="F:ATP-dependent protein folding chaperone"/>
    <property type="evidence" value="ECO:0007669"/>
    <property type="project" value="InterPro"/>
</dbReference>
<dbReference type="GO" id="GO:0046983">
    <property type="term" value="F:protein dimerization activity"/>
    <property type="evidence" value="ECO:0007669"/>
    <property type="project" value="InterPro"/>
</dbReference>
<dbReference type="GO" id="GO:0051082">
    <property type="term" value="F:unfolded protein binding"/>
    <property type="evidence" value="ECO:0007669"/>
    <property type="project" value="UniProtKB-UniRule"/>
</dbReference>
<dbReference type="GO" id="GO:0008270">
    <property type="term" value="F:zinc ion binding"/>
    <property type="evidence" value="ECO:0007669"/>
    <property type="project" value="InterPro"/>
</dbReference>
<dbReference type="GO" id="GO:0051301">
    <property type="term" value="P:cell division"/>
    <property type="evidence" value="ECO:0007669"/>
    <property type="project" value="TreeGrafter"/>
</dbReference>
<dbReference type="GO" id="GO:0051603">
    <property type="term" value="P:proteolysis involved in protein catabolic process"/>
    <property type="evidence" value="ECO:0007669"/>
    <property type="project" value="TreeGrafter"/>
</dbReference>
<dbReference type="CDD" id="cd19497">
    <property type="entry name" value="RecA-like_ClpX"/>
    <property type="match status" value="1"/>
</dbReference>
<dbReference type="FunFam" id="1.10.8.60:FF:000002">
    <property type="entry name" value="ATP-dependent Clp protease ATP-binding subunit ClpX"/>
    <property type="match status" value="1"/>
</dbReference>
<dbReference type="FunFam" id="3.40.50.300:FF:000005">
    <property type="entry name" value="ATP-dependent Clp protease ATP-binding subunit ClpX"/>
    <property type="match status" value="1"/>
</dbReference>
<dbReference type="Gene3D" id="1.10.8.60">
    <property type="match status" value="1"/>
</dbReference>
<dbReference type="Gene3D" id="6.20.220.10">
    <property type="entry name" value="ClpX chaperone, C4-type zinc finger domain"/>
    <property type="match status" value="1"/>
</dbReference>
<dbReference type="Gene3D" id="3.40.50.300">
    <property type="entry name" value="P-loop containing nucleotide triphosphate hydrolases"/>
    <property type="match status" value="1"/>
</dbReference>
<dbReference type="HAMAP" id="MF_00175">
    <property type="entry name" value="ClpX"/>
    <property type="match status" value="1"/>
</dbReference>
<dbReference type="InterPro" id="IPR003593">
    <property type="entry name" value="AAA+_ATPase"/>
</dbReference>
<dbReference type="InterPro" id="IPR050052">
    <property type="entry name" value="ATP-dep_Clp_protease_ClpX"/>
</dbReference>
<dbReference type="InterPro" id="IPR003959">
    <property type="entry name" value="ATPase_AAA_core"/>
</dbReference>
<dbReference type="InterPro" id="IPR019489">
    <property type="entry name" value="Clp_ATPase_C"/>
</dbReference>
<dbReference type="InterPro" id="IPR004487">
    <property type="entry name" value="Clp_protease_ATP-bd_su_ClpX"/>
</dbReference>
<dbReference type="InterPro" id="IPR046425">
    <property type="entry name" value="ClpX_bact"/>
</dbReference>
<dbReference type="InterPro" id="IPR027417">
    <property type="entry name" value="P-loop_NTPase"/>
</dbReference>
<dbReference type="InterPro" id="IPR010603">
    <property type="entry name" value="Znf_CppX_C4"/>
</dbReference>
<dbReference type="InterPro" id="IPR038366">
    <property type="entry name" value="Znf_CppX_C4_sf"/>
</dbReference>
<dbReference type="NCBIfam" id="TIGR00382">
    <property type="entry name" value="clpX"/>
    <property type="match status" value="1"/>
</dbReference>
<dbReference type="NCBIfam" id="NF003745">
    <property type="entry name" value="PRK05342.1"/>
    <property type="match status" value="1"/>
</dbReference>
<dbReference type="PANTHER" id="PTHR48102:SF7">
    <property type="entry name" value="ATP-DEPENDENT CLP PROTEASE ATP-BINDING SUBUNIT CLPX-LIKE, MITOCHONDRIAL"/>
    <property type="match status" value="1"/>
</dbReference>
<dbReference type="PANTHER" id="PTHR48102">
    <property type="entry name" value="ATP-DEPENDENT CLP PROTEASE ATP-BINDING SUBUNIT CLPX-LIKE, MITOCHONDRIAL-RELATED"/>
    <property type="match status" value="1"/>
</dbReference>
<dbReference type="Pfam" id="PF07724">
    <property type="entry name" value="AAA_2"/>
    <property type="match status" value="1"/>
</dbReference>
<dbReference type="Pfam" id="PF10431">
    <property type="entry name" value="ClpB_D2-small"/>
    <property type="match status" value="1"/>
</dbReference>
<dbReference type="Pfam" id="PF06689">
    <property type="entry name" value="zf-C4_ClpX"/>
    <property type="match status" value="1"/>
</dbReference>
<dbReference type="SMART" id="SM00382">
    <property type="entry name" value="AAA"/>
    <property type="match status" value="1"/>
</dbReference>
<dbReference type="SMART" id="SM01086">
    <property type="entry name" value="ClpB_D2-small"/>
    <property type="match status" value="1"/>
</dbReference>
<dbReference type="SMART" id="SM00994">
    <property type="entry name" value="zf-C4_ClpX"/>
    <property type="match status" value="1"/>
</dbReference>
<dbReference type="SUPFAM" id="SSF57716">
    <property type="entry name" value="Glucocorticoid receptor-like (DNA-binding domain)"/>
    <property type="match status" value="1"/>
</dbReference>
<dbReference type="SUPFAM" id="SSF52540">
    <property type="entry name" value="P-loop containing nucleoside triphosphate hydrolases"/>
    <property type="match status" value="1"/>
</dbReference>
<dbReference type="PROSITE" id="PS51902">
    <property type="entry name" value="CLPX_ZB"/>
    <property type="match status" value="1"/>
</dbReference>
<accession>Q8YQX7</accession>
<name>CLPX_NOSS1</name>